<gene>
    <name type="primary">PALMD</name>
</gene>
<dbReference type="EMBL" id="BC105234">
    <property type="protein sequence ID" value="AAI05235.1"/>
    <property type="molecule type" value="mRNA"/>
</dbReference>
<dbReference type="RefSeq" id="NP_001030251.1">
    <property type="nucleotide sequence ID" value="NM_001035079.2"/>
</dbReference>
<dbReference type="SMR" id="Q3MHH7"/>
<dbReference type="FunCoup" id="Q3MHH7">
    <property type="interactions" value="66"/>
</dbReference>
<dbReference type="STRING" id="9913.ENSBTAP00000069095"/>
<dbReference type="PaxDb" id="9913-ENSBTAP00000023485"/>
<dbReference type="GeneID" id="509823"/>
<dbReference type="KEGG" id="bta:509823"/>
<dbReference type="CTD" id="54873"/>
<dbReference type="eggNOG" id="ENOG502QVMH">
    <property type="taxonomic scope" value="Eukaryota"/>
</dbReference>
<dbReference type="InParanoid" id="Q3MHH7"/>
<dbReference type="OrthoDB" id="9937247at2759"/>
<dbReference type="Proteomes" id="UP000009136">
    <property type="component" value="Unplaced"/>
</dbReference>
<dbReference type="GO" id="GO:0005737">
    <property type="term" value="C:cytoplasm"/>
    <property type="evidence" value="ECO:0000318"/>
    <property type="project" value="GO_Central"/>
</dbReference>
<dbReference type="GO" id="GO:0043197">
    <property type="term" value="C:dendritic spine"/>
    <property type="evidence" value="ECO:0007669"/>
    <property type="project" value="UniProtKB-SubCell"/>
</dbReference>
<dbReference type="GO" id="GO:0016020">
    <property type="term" value="C:membrane"/>
    <property type="evidence" value="ECO:0007669"/>
    <property type="project" value="InterPro"/>
</dbReference>
<dbReference type="GO" id="GO:0008360">
    <property type="term" value="P:regulation of cell shape"/>
    <property type="evidence" value="ECO:0007669"/>
    <property type="project" value="InterPro"/>
</dbReference>
<dbReference type="InterPro" id="IPR004965">
    <property type="entry name" value="Paralemmin"/>
</dbReference>
<dbReference type="PANTHER" id="PTHR46881">
    <property type="entry name" value="PALMDELPHIN"/>
    <property type="match status" value="1"/>
</dbReference>
<dbReference type="PANTHER" id="PTHR46881:SF1">
    <property type="entry name" value="PALMDELPHIN"/>
    <property type="match status" value="1"/>
</dbReference>
<dbReference type="Pfam" id="PF03285">
    <property type="entry name" value="Paralemmin"/>
    <property type="match status" value="2"/>
</dbReference>
<keyword id="KW-0007">Acetylation</keyword>
<keyword id="KW-0966">Cell projection</keyword>
<keyword id="KW-0175">Coiled coil</keyword>
<keyword id="KW-0963">Cytoplasm</keyword>
<keyword id="KW-1017">Isopeptide bond</keyword>
<keyword id="KW-0597">Phosphoprotein</keyword>
<keyword id="KW-1185">Reference proteome</keyword>
<keyword id="KW-0770">Synapse</keyword>
<keyword id="KW-0832">Ubl conjugation</keyword>
<comment type="subunit">
    <text evidence="1">Interacts with GLUL.</text>
</comment>
<comment type="subcellular location">
    <subcellularLocation>
        <location evidence="1">Cytoplasm</location>
    </subcellularLocation>
    <subcellularLocation>
        <location>Cell projection</location>
        <location>Dendrite</location>
    </subcellularLocation>
    <subcellularLocation>
        <location evidence="1">Cell projection</location>
        <location evidence="1">Dendritic spine</location>
    </subcellularLocation>
</comment>
<comment type="PTM">
    <text evidence="1">Phosphorylated.</text>
</comment>
<comment type="similarity">
    <text evidence="6">Belongs to the paralemmin family.</text>
</comment>
<feature type="chain" id="PRO_0000262527" description="Palmdelphin">
    <location>
        <begin position="1"/>
        <end position="550"/>
    </location>
</feature>
<feature type="region of interest" description="Disordered" evidence="5">
    <location>
        <begin position="248"/>
        <end position="280"/>
    </location>
</feature>
<feature type="region of interest" description="Disordered" evidence="5">
    <location>
        <begin position="356"/>
        <end position="393"/>
    </location>
</feature>
<feature type="region of interest" description="Disordered" evidence="5">
    <location>
        <begin position="463"/>
        <end position="528"/>
    </location>
</feature>
<feature type="coiled-coil region" evidence="4">
    <location>
        <begin position="2"/>
        <end position="106"/>
    </location>
</feature>
<feature type="compositionally biased region" description="Basic and acidic residues" evidence="5">
    <location>
        <begin position="248"/>
        <end position="259"/>
    </location>
</feature>
<feature type="compositionally biased region" description="Basic and acidic residues" evidence="5">
    <location>
        <begin position="483"/>
        <end position="494"/>
    </location>
</feature>
<feature type="modified residue" description="N-acetylmethionine" evidence="3">
    <location>
        <position position="1"/>
    </location>
</feature>
<feature type="modified residue" description="Phosphoserine" evidence="3">
    <location>
        <position position="135"/>
    </location>
</feature>
<feature type="modified residue" description="Phosphothreonine" evidence="2">
    <location>
        <position position="271"/>
    </location>
</feature>
<feature type="modified residue" description="Phosphoserine" evidence="3">
    <location>
        <position position="321"/>
    </location>
</feature>
<feature type="modified residue" description="Phosphoserine" evidence="2">
    <location>
        <position position="370"/>
    </location>
</feature>
<feature type="modified residue" description="Phosphoserine" evidence="3">
    <location>
        <position position="384"/>
    </location>
</feature>
<feature type="modified residue" description="Phosphoserine" evidence="2">
    <location>
        <position position="385"/>
    </location>
</feature>
<feature type="modified residue" description="Phosphoserine" evidence="3">
    <location>
        <position position="497"/>
    </location>
</feature>
<feature type="modified residue" description="Phosphoserine" evidence="3">
    <location>
        <position position="514"/>
    </location>
</feature>
<feature type="modified residue" description="Phosphoserine" evidence="3">
    <location>
        <position position="519"/>
    </location>
</feature>
<feature type="cross-link" description="Glycyl lysine isopeptide (Lys-Gly) (interchain with G-Cter in SUMO2)" evidence="3">
    <location>
        <position position="125"/>
    </location>
</feature>
<feature type="cross-link" description="Glycyl lysine isopeptide (Lys-Gly) (interchain with G-Cter in SUMO1); alternate" evidence="3">
    <location>
        <position position="179"/>
    </location>
</feature>
<feature type="cross-link" description="Glycyl lysine isopeptide (Lys-Gly) (interchain with G-Cter in SUMO2); alternate" evidence="3">
    <location>
        <position position="179"/>
    </location>
</feature>
<evidence type="ECO:0000250" key="1"/>
<evidence type="ECO:0000250" key="2">
    <source>
        <dbReference type="UniProtKB" id="Q9JHU2"/>
    </source>
</evidence>
<evidence type="ECO:0000250" key="3">
    <source>
        <dbReference type="UniProtKB" id="Q9NP74"/>
    </source>
</evidence>
<evidence type="ECO:0000255" key="4"/>
<evidence type="ECO:0000256" key="5">
    <source>
        <dbReference type="SAM" id="MobiDB-lite"/>
    </source>
</evidence>
<evidence type="ECO:0000305" key="6"/>
<reference key="1">
    <citation type="submission" date="2005-09" db="EMBL/GenBank/DDBJ databases">
        <authorList>
            <consortium name="NIH - Mammalian Gene Collection (MGC) project"/>
        </authorList>
    </citation>
    <scope>NUCLEOTIDE SEQUENCE [LARGE SCALE MRNA]</scope>
    <source>
        <strain>Hereford</strain>
        <tissue>Heart ventricle</tissue>
    </source>
</reference>
<protein>
    <recommendedName>
        <fullName>Palmdelphin</fullName>
    </recommendedName>
</protein>
<proteinExistence type="evidence at transcript level"/>
<accession>Q3MHH7</accession>
<organism>
    <name type="scientific">Bos taurus</name>
    <name type="common">Bovine</name>
    <dbReference type="NCBI Taxonomy" id="9913"/>
    <lineage>
        <taxon>Eukaryota</taxon>
        <taxon>Metazoa</taxon>
        <taxon>Chordata</taxon>
        <taxon>Craniata</taxon>
        <taxon>Vertebrata</taxon>
        <taxon>Euteleostomi</taxon>
        <taxon>Mammalia</taxon>
        <taxon>Eutheria</taxon>
        <taxon>Laurasiatheria</taxon>
        <taxon>Artiodactyla</taxon>
        <taxon>Ruminantia</taxon>
        <taxon>Pecora</taxon>
        <taxon>Bovidae</taxon>
        <taxon>Bovinae</taxon>
        <taxon>Bos</taxon>
    </lineage>
</organism>
<name>PALMD_BOVIN</name>
<sequence>MEEAELVKERLQAITDKRKIQEEISQKRLKIEEEKLKHQHLKKKALREKWLLDGISSGKEQEEMKKQNQQDQHQIQVLEQSILRLEKEIQDLEKAELQISTNEEAILKKLKSVERTTEDIIRSVKVEKEETSGESVEDIYANIPDLPKSYIPSRLRKERNEGIEDDEQNRKALYAMEIKVEKDLKTGESTVLSSIPLPSDDFKGTGIKVYDDGQKSVYAVSSNHSAAYNGTDGLAPVEVEELLRQASERNSKSPTEYHEPVYANPFCRPTTPQREKVTPGPNFQERVKIKANGLGNDVNGSIHNIDNGLAEERGNNVNHISPARPIPHPRSMIQQAEEMPHIQQERLMTPWEEPNVMQDKYTPSPKSGLSPSRALVEKSERQSSSPPCQEDEKDIRYNIVHSLPSDLDEKEPVTMIFMGYQQAEDNEEEKKLLTGYDGIIHAELVVIDDEEEGEGEAEKPAYHPIAPHSQVFQPAKPTPLPRKRAEVNPHENTNHKSPHKNSISLKEQEESLGSPIHHSPLDVQIAGDGTEDPSLTALRMRMAKLGKKVI</sequence>